<reference key="1">
    <citation type="journal article" date="2009" name="BMC Genomics">
        <title>Pseudogene accumulation in the evolutionary histories of Salmonella enterica serovars Paratyphi A and Typhi.</title>
        <authorList>
            <person name="Holt K.E."/>
            <person name="Thomson N.R."/>
            <person name="Wain J."/>
            <person name="Langridge G.C."/>
            <person name="Hasan R."/>
            <person name="Bhutta Z.A."/>
            <person name="Quail M.A."/>
            <person name="Norbertczak H."/>
            <person name="Walker D."/>
            <person name="Simmonds M."/>
            <person name="White B."/>
            <person name="Bason N."/>
            <person name="Mungall K."/>
            <person name="Dougan G."/>
            <person name="Parkhill J."/>
        </authorList>
    </citation>
    <scope>NUCLEOTIDE SEQUENCE [LARGE SCALE GENOMIC DNA]</scope>
    <source>
        <strain>AKU_12601</strain>
    </source>
</reference>
<dbReference type="EMBL" id="FM200053">
    <property type="protein sequence ID" value="CAR58898.1"/>
    <property type="molecule type" value="Genomic_DNA"/>
</dbReference>
<dbReference type="RefSeq" id="WP_000450405.1">
    <property type="nucleotide sequence ID" value="NC_011147.1"/>
</dbReference>
<dbReference type="SMR" id="B5BFD0"/>
<dbReference type="KEGG" id="sek:SSPA0759"/>
<dbReference type="HOGENOM" id="CLU_153146_0_0_6"/>
<dbReference type="Proteomes" id="UP000001869">
    <property type="component" value="Chromosome"/>
</dbReference>
<dbReference type="GO" id="GO:0005829">
    <property type="term" value="C:cytosol"/>
    <property type="evidence" value="ECO:0007669"/>
    <property type="project" value="TreeGrafter"/>
</dbReference>
<dbReference type="HAMAP" id="MF_00683">
    <property type="entry name" value="Pole_loc_TmaR"/>
    <property type="match status" value="1"/>
</dbReference>
<dbReference type="InterPro" id="IPR007458">
    <property type="entry name" value="DUF496"/>
</dbReference>
<dbReference type="InterPro" id="IPR053375">
    <property type="entry name" value="UPF0265"/>
</dbReference>
<dbReference type="NCBIfam" id="NF003844">
    <property type="entry name" value="PRK05423.1"/>
    <property type="match status" value="1"/>
</dbReference>
<dbReference type="NCBIfam" id="NF040881">
    <property type="entry name" value="PTS_reg_TmaR"/>
    <property type="match status" value="1"/>
</dbReference>
<dbReference type="PANTHER" id="PTHR39591">
    <property type="entry name" value="UPF0265 PROTEIN YEEX"/>
    <property type="match status" value="1"/>
</dbReference>
<dbReference type="PANTHER" id="PTHR39591:SF1">
    <property type="entry name" value="UPF0265 PROTEIN YEEX"/>
    <property type="match status" value="1"/>
</dbReference>
<dbReference type="Pfam" id="PF04363">
    <property type="entry name" value="DUF496"/>
    <property type="match status" value="1"/>
</dbReference>
<dbReference type="PIRSF" id="PIRSF028773">
    <property type="entry name" value="UCP028773"/>
    <property type="match status" value="1"/>
</dbReference>
<proteinExistence type="inferred from homology"/>
<name>TMAR_SALPK</name>
<feature type="chain" id="PRO_1000131777" description="Pole-localizer protein TmaR">
    <location>
        <begin position="1"/>
        <end position="111"/>
    </location>
</feature>
<feature type="coiled-coil region" evidence="1">
    <location>
        <begin position="14"/>
        <end position="41"/>
    </location>
</feature>
<evidence type="ECO:0000255" key="1">
    <source>
        <dbReference type="HAMAP-Rule" id="MF_00683"/>
    </source>
</evidence>
<comment type="function">
    <text evidence="1">Pole-localizer protein involved in the regulation of several cellular processes.</text>
</comment>
<comment type="subcellular location">
    <subcellularLocation>
        <location evidence="1">Cytoplasm</location>
    </subcellularLocation>
    <text evidence="1">Forms clusters that localize mainly near one pole of the cell.</text>
</comment>
<comment type="similarity">
    <text evidence="1">Belongs to the pole-localizer TmaR family.</text>
</comment>
<organism>
    <name type="scientific">Salmonella paratyphi A (strain AKU_12601)</name>
    <dbReference type="NCBI Taxonomy" id="554290"/>
    <lineage>
        <taxon>Bacteria</taxon>
        <taxon>Pseudomonadati</taxon>
        <taxon>Pseudomonadota</taxon>
        <taxon>Gammaproteobacteria</taxon>
        <taxon>Enterobacterales</taxon>
        <taxon>Enterobacteriaceae</taxon>
        <taxon>Salmonella</taxon>
    </lineage>
</organism>
<sequence>METTKPSFQDVLEFVRLFRRKNKLQREIQDIEKKIRDNQKRVLLLDNLSDYIKPGMSVEAIQGIIASMKSDYEDRVDDYIIKNAEISKERRDISKKLKAMGEMKHADVKAE</sequence>
<protein>
    <recommendedName>
        <fullName evidence="1">Pole-localizer protein TmaR</fullName>
    </recommendedName>
</protein>
<keyword id="KW-0175">Coiled coil</keyword>
<keyword id="KW-0963">Cytoplasm</keyword>
<accession>B5BFD0</accession>
<gene>
    <name evidence="1" type="primary">tmaR</name>
    <name type="ordered locus">SSPA0759</name>
</gene>